<proteinExistence type="inferred from homology"/>
<feature type="chain" id="PRO_1000056095" description="Large ribosomal subunit protein uL30">
    <location>
        <begin position="1"/>
        <end position="64"/>
    </location>
</feature>
<sequence length="64" mass="7182">MANAANMIKVEQIGSPIRRHHSQRATLVGLKLNKIGRVTELQDTPEVRGMIAKVQHLVRVVDEK</sequence>
<dbReference type="EMBL" id="CP000250">
    <property type="protein sequence ID" value="ABD07018.1"/>
    <property type="molecule type" value="Genomic_DNA"/>
</dbReference>
<dbReference type="RefSeq" id="WP_011441203.1">
    <property type="nucleotide sequence ID" value="NC_007778.1"/>
</dbReference>
<dbReference type="SMR" id="Q2IXP2"/>
<dbReference type="STRING" id="316058.RPB_2313"/>
<dbReference type="KEGG" id="rpb:RPB_2313"/>
<dbReference type="eggNOG" id="COG1841">
    <property type="taxonomic scope" value="Bacteria"/>
</dbReference>
<dbReference type="HOGENOM" id="CLU_131047_1_2_5"/>
<dbReference type="OrthoDB" id="9812790at2"/>
<dbReference type="Proteomes" id="UP000008809">
    <property type="component" value="Chromosome"/>
</dbReference>
<dbReference type="GO" id="GO:0022625">
    <property type="term" value="C:cytosolic large ribosomal subunit"/>
    <property type="evidence" value="ECO:0007669"/>
    <property type="project" value="TreeGrafter"/>
</dbReference>
<dbReference type="GO" id="GO:0003735">
    <property type="term" value="F:structural constituent of ribosome"/>
    <property type="evidence" value="ECO:0007669"/>
    <property type="project" value="InterPro"/>
</dbReference>
<dbReference type="GO" id="GO:0006412">
    <property type="term" value="P:translation"/>
    <property type="evidence" value="ECO:0007669"/>
    <property type="project" value="UniProtKB-UniRule"/>
</dbReference>
<dbReference type="CDD" id="cd01658">
    <property type="entry name" value="Ribosomal_L30"/>
    <property type="match status" value="1"/>
</dbReference>
<dbReference type="Gene3D" id="3.30.1390.20">
    <property type="entry name" value="Ribosomal protein L30, ferredoxin-like fold domain"/>
    <property type="match status" value="1"/>
</dbReference>
<dbReference type="HAMAP" id="MF_01371_B">
    <property type="entry name" value="Ribosomal_uL30_B"/>
    <property type="match status" value="1"/>
</dbReference>
<dbReference type="InterPro" id="IPR036919">
    <property type="entry name" value="Ribo_uL30_ferredoxin-like_sf"/>
</dbReference>
<dbReference type="InterPro" id="IPR005996">
    <property type="entry name" value="Ribosomal_uL30_bac-type"/>
</dbReference>
<dbReference type="InterPro" id="IPR016082">
    <property type="entry name" value="Ribosomal_uL30_ferredoxin-like"/>
</dbReference>
<dbReference type="NCBIfam" id="TIGR01308">
    <property type="entry name" value="rpmD_bact"/>
    <property type="match status" value="1"/>
</dbReference>
<dbReference type="PANTHER" id="PTHR15892:SF2">
    <property type="entry name" value="LARGE RIBOSOMAL SUBUNIT PROTEIN UL30M"/>
    <property type="match status" value="1"/>
</dbReference>
<dbReference type="PANTHER" id="PTHR15892">
    <property type="entry name" value="MITOCHONDRIAL RIBOSOMAL PROTEIN L30"/>
    <property type="match status" value="1"/>
</dbReference>
<dbReference type="Pfam" id="PF00327">
    <property type="entry name" value="Ribosomal_L30"/>
    <property type="match status" value="1"/>
</dbReference>
<dbReference type="PIRSF" id="PIRSF002211">
    <property type="entry name" value="Ribosomal_L30_bac-type"/>
    <property type="match status" value="1"/>
</dbReference>
<dbReference type="SUPFAM" id="SSF55129">
    <property type="entry name" value="Ribosomal protein L30p/L7e"/>
    <property type="match status" value="1"/>
</dbReference>
<reference key="1">
    <citation type="submission" date="2006-01" db="EMBL/GenBank/DDBJ databases">
        <title>Complete sequence of Rhodopseudomonas palustris HaA2.</title>
        <authorList>
            <consortium name="US DOE Joint Genome Institute"/>
            <person name="Copeland A."/>
            <person name="Lucas S."/>
            <person name="Lapidus A."/>
            <person name="Barry K."/>
            <person name="Detter J.C."/>
            <person name="Glavina T."/>
            <person name="Hammon N."/>
            <person name="Israni S."/>
            <person name="Pitluck S."/>
            <person name="Chain P."/>
            <person name="Malfatti S."/>
            <person name="Shin M."/>
            <person name="Vergez L."/>
            <person name="Schmutz J."/>
            <person name="Larimer F."/>
            <person name="Land M."/>
            <person name="Hauser L."/>
            <person name="Pelletier D.A."/>
            <person name="Kyrpides N."/>
            <person name="Anderson I."/>
            <person name="Oda Y."/>
            <person name="Harwood C.S."/>
            <person name="Richardson P."/>
        </authorList>
    </citation>
    <scope>NUCLEOTIDE SEQUENCE [LARGE SCALE GENOMIC DNA]</scope>
    <source>
        <strain>HaA2</strain>
    </source>
</reference>
<gene>
    <name evidence="1" type="primary">rpmD</name>
    <name type="ordered locus">RPB_2313</name>
</gene>
<evidence type="ECO:0000255" key="1">
    <source>
        <dbReference type="HAMAP-Rule" id="MF_01371"/>
    </source>
</evidence>
<evidence type="ECO:0000305" key="2"/>
<organism>
    <name type="scientific">Rhodopseudomonas palustris (strain HaA2)</name>
    <dbReference type="NCBI Taxonomy" id="316058"/>
    <lineage>
        <taxon>Bacteria</taxon>
        <taxon>Pseudomonadati</taxon>
        <taxon>Pseudomonadota</taxon>
        <taxon>Alphaproteobacteria</taxon>
        <taxon>Hyphomicrobiales</taxon>
        <taxon>Nitrobacteraceae</taxon>
        <taxon>Rhodopseudomonas</taxon>
    </lineage>
</organism>
<accession>Q2IXP2</accession>
<keyword id="KW-1185">Reference proteome</keyword>
<keyword id="KW-0687">Ribonucleoprotein</keyword>
<keyword id="KW-0689">Ribosomal protein</keyword>
<comment type="subunit">
    <text evidence="1">Part of the 50S ribosomal subunit.</text>
</comment>
<comment type="similarity">
    <text evidence="1">Belongs to the universal ribosomal protein uL30 family.</text>
</comment>
<protein>
    <recommendedName>
        <fullName evidence="1">Large ribosomal subunit protein uL30</fullName>
    </recommendedName>
    <alternativeName>
        <fullName evidence="2">50S ribosomal protein L30</fullName>
    </alternativeName>
</protein>
<name>RL30_RHOP2</name>